<name>HSLU_BRUSI</name>
<feature type="chain" id="PRO_1000078440" description="ATP-dependent protease ATPase subunit HslU">
    <location>
        <begin position="1"/>
        <end position="434"/>
    </location>
</feature>
<feature type="binding site" evidence="1">
    <location>
        <position position="18"/>
    </location>
    <ligand>
        <name>ATP</name>
        <dbReference type="ChEBI" id="CHEBI:30616"/>
    </ligand>
</feature>
<feature type="binding site" evidence="1">
    <location>
        <begin position="60"/>
        <end position="65"/>
    </location>
    <ligand>
        <name>ATP</name>
        <dbReference type="ChEBI" id="CHEBI:30616"/>
    </ligand>
</feature>
<feature type="binding site" evidence="1">
    <location>
        <position position="247"/>
    </location>
    <ligand>
        <name>ATP</name>
        <dbReference type="ChEBI" id="CHEBI:30616"/>
    </ligand>
</feature>
<feature type="binding site" evidence="1">
    <location>
        <position position="312"/>
    </location>
    <ligand>
        <name>ATP</name>
        <dbReference type="ChEBI" id="CHEBI:30616"/>
    </ligand>
</feature>
<feature type="binding site" evidence="1">
    <location>
        <position position="384"/>
    </location>
    <ligand>
        <name>ATP</name>
        <dbReference type="ChEBI" id="CHEBI:30616"/>
    </ligand>
</feature>
<keyword id="KW-0067">ATP-binding</keyword>
<keyword id="KW-0143">Chaperone</keyword>
<keyword id="KW-0963">Cytoplasm</keyword>
<keyword id="KW-0547">Nucleotide-binding</keyword>
<keyword id="KW-0346">Stress response</keyword>
<accession>B0CJH9</accession>
<reference key="1">
    <citation type="submission" date="2007-12" db="EMBL/GenBank/DDBJ databases">
        <title>Brucella suis ATCC 23445 whole genome shotgun sequencing project.</title>
        <authorList>
            <person name="Setubal J.C."/>
            <person name="Bowns C."/>
            <person name="Boyle S."/>
            <person name="Crasta O.R."/>
            <person name="Czar M.J."/>
            <person name="Dharmanolla C."/>
            <person name="Gillespie J.J."/>
            <person name="Kenyon R.W."/>
            <person name="Lu J."/>
            <person name="Mane S."/>
            <person name="Mohapatra S."/>
            <person name="Nagrani S."/>
            <person name="Purkayastha A."/>
            <person name="Rajasimha H.K."/>
            <person name="Shallom J.M."/>
            <person name="Shallom S."/>
            <person name="Shukla M."/>
            <person name="Snyder E.E."/>
            <person name="Sobral B.W."/>
            <person name="Wattam A.R."/>
            <person name="Will R."/>
            <person name="Williams K."/>
            <person name="Yoo H."/>
            <person name="Bruce D."/>
            <person name="Detter C."/>
            <person name="Munk C."/>
            <person name="Brettin T.S."/>
        </authorList>
    </citation>
    <scope>NUCLEOTIDE SEQUENCE [LARGE SCALE GENOMIC DNA]</scope>
    <source>
        <strain>ATCC 23445 / NCTC 10510</strain>
    </source>
</reference>
<proteinExistence type="inferred from homology"/>
<gene>
    <name evidence="1" type="primary">hslU</name>
    <name type="ordered locus">BSUIS_A1920</name>
</gene>
<comment type="function">
    <text evidence="1">ATPase subunit of a proteasome-like degradation complex; this subunit has chaperone activity. The binding of ATP and its subsequent hydrolysis by HslU are essential for unfolding of protein substrates subsequently hydrolyzed by HslV. HslU recognizes the N-terminal part of its protein substrates and unfolds these before they are guided to HslV for hydrolysis.</text>
</comment>
<comment type="subunit">
    <text evidence="1">A double ring-shaped homohexamer of HslV is capped on each side by a ring-shaped HslU homohexamer. The assembly of the HslU/HslV complex is dependent on binding of ATP.</text>
</comment>
<comment type="subcellular location">
    <subcellularLocation>
        <location evidence="1">Cytoplasm</location>
    </subcellularLocation>
</comment>
<comment type="similarity">
    <text evidence="1">Belongs to the ClpX chaperone family. HslU subfamily.</text>
</comment>
<evidence type="ECO:0000255" key="1">
    <source>
        <dbReference type="HAMAP-Rule" id="MF_00249"/>
    </source>
</evidence>
<sequence>MSNFSPREIVSELDRFIIGQKDAKRAVAIALRNRWRRQQLEGQMREEVMPKNILMIGPTGVGKTEISRRLAKLAGAPFVKVEATKFTEVGYVGRDVEQIIRDLVEIAITLVREKRREDVKAKAHLNAEERVLDALVGKTASPATRDSFRKKLRNGEMDDKEIEIEVSDSGASPNFEIPGMPGANIGVLNISDMLGKAMGGRTKTRKTTVKDSYPILINDESDKLLDQDQIVQEALRVSEDEGIVFIDEIDKIAAREGGSGAGVSREGVQRDLLPLVEGTTVATKYGPVKTDHILFITSGAFHVSKPSDLLPELQGRLPIRVELSALTREDFRRILTETEASLIKQYIALMETEEVKLEFSDDAIDALADIAVDLNATVENIGARRLQTVMEKVLDEISFTAPDKAGATFIIDAAYVKEKIGGLAKNTDLSRFIL</sequence>
<organism>
    <name type="scientific">Brucella suis (strain ATCC 23445 / NCTC 10510)</name>
    <dbReference type="NCBI Taxonomy" id="470137"/>
    <lineage>
        <taxon>Bacteria</taxon>
        <taxon>Pseudomonadati</taxon>
        <taxon>Pseudomonadota</taxon>
        <taxon>Alphaproteobacteria</taxon>
        <taxon>Hyphomicrobiales</taxon>
        <taxon>Brucellaceae</taxon>
        <taxon>Brucella/Ochrobactrum group</taxon>
        <taxon>Brucella</taxon>
    </lineage>
</organism>
<protein>
    <recommendedName>
        <fullName evidence="1">ATP-dependent protease ATPase subunit HslU</fullName>
    </recommendedName>
    <alternativeName>
        <fullName evidence="1">Unfoldase HslU</fullName>
    </alternativeName>
</protein>
<dbReference type="EMBL" id="CP000911">
    <property type="protein sequence ID" value="ABY38931.1"/>
    <property type="molecule type" value="Genomic_DNA"/>
</dbReference>
<dbReference type="RefSeq" id="WP_002965143.1">
    <property type="nucleotide sequence ID" value="NC_010169.1"/>
</dbReference>
<dbReference type="SMR" id="B0CJH9"/>
<dbReference type="GeneID" id="97534659"/>
<dbReference type="KEGG" id="bmt:BSUIS_A1920"/>
<dbReference type="HOGENOM" id="CLU_033123_0_0_5"/>
<dbReference type="Proteomes" id="UP000008545">
    <property type="component" value="Chromosome I"/>
</dbReference>
<dbReference type="GO" id="GO:0009376">
    <property type="term" value="C:HslUV protease complex"/>
    <property type="evidence" value="ECO:0007669"/>
    <property type="project" value="UniProtKB-UniRule"/>
</dbReference>
<dbReference type="GO" id="GO:0005524">
    <property type="term" value="F:ATP binding"/>
    <property type="evidence" value="ECO:0007669"/>
    <property type="project" value="UniProtKB-UniRule"/>
</dbReference>
<dbReference type="GO" id="GO:0016887">
    <property type="term" value="F:ATP hydrolysis activity"/>
    <property type="evidence" value="ECO:0007669"/>
    <property type="project" value="InterPro"/>
</dbReference>
<dbReference type="GO" id="GO:0008233">
    <property type="term" value="F:peptidase activity"/>
    <property type="evidence" value="ECO:0007669"/>
    <property type="project" value="InterPro"/>
</dbReference>
<dbReference type="GO" id="GO:0036402">
    <property type="term" value="F:proteasome-activating activity"/>
    <property type="evidence" value="ECO:0007669"/>
    <property type="project" value="UniProtKB-UniRule"/>
</dbReference>
<dbReference type="GO" id="GO:0043335">
    <property type="term" value="P:protein unfolding"/>
    <property type="evidence" value="ECO:0007669"/>
    <property type="project" value="UniProtKB-UniRule"/>
</dbReference>
<dbReference type="GO" id="GO:0051603">
    <property type="term" value="P:proteolysis involved in protein catabolic process"/>
    <property type="evidence" value="ECO:0007669"/>
    <property type="project" value="TreeGrafter"/>
</dbReference>
<dbReference type="CDD" id="cd19498">
    <property type="entry name" value="RecA-like_HslU"/>
    <property type="match status" value="1"/>
</dbReference>
<dbReference type="FunFam" id="3.40.50.300:FF:000213">
    <property type="entry name" value="ATP-dependent protease ATPase subunit HslU"/>
    <property type="match status" value="1"/>
</dbReference>
<dbReference type="FunFam" id="3.40.50.300:FF:000220">
    <property type="entry name" value="ATP-dependent protease ATPase subunit HslU"/>
    <property type="match status" value="1"/>
</dbReference>
<dbReference type="Gene3D" id="1.10.8.60">
    <property type="match status" value="1"/>
</dbReference>
<dbReference type="Gene3D" id="1.10.8.10">
    <property type="entry name" value="DNA helicase RuvA subunit, C-terminal domain"/>
    <property type="match status" value="1"/>
</dbReference>
<dbReference type="Gene3D" id="3.40.50.300">
    <property type="entry name" value="P-loop containing nucleotide triphosphate hydrolases"/>
    <property type="match status" value="1"/>
</dbReference>
<dbReference type="HAMAP" id="MF_00249">
    <property type="entry name" value="HslU"/>
    <property type="match status" value="1"/>
</dbReference>
<dbReference type="InterPro" id="IPR003593">
    <property type="entry name" value="AAA+_ATPase"/>
</dbReference>
<dbReference type="InterPro" id="IPR050052">
    <property type="entry name" value="ATP-dep_Clp_protease_ClpX"/>
</dbReference>
<dbReference type="InterPro" id="IPR003959">
    <property type="entry name" value="ATPase_AAA_core"/>
</dbReference>
<dbReference type="InterPro" id="IPR019489">
    <property type="entry name" value="Clp_ATPase_C"/>
</dbReference>
<dbReference type="InterPro" id="IPR004491">
    <property type="entry name" value="HslU"/>
</dbReference>
<dbReference type="InterPro" id="IPR027417">
    <property type="entry name" value="P-loop_NTPase"/>
</dbReference>
<dbReference type="NCBIfam" id="TIGR00390">
    <property type="entry name" value="hslU"/>
    <property type="match status" value="1"/>
</dbReference>
<dbReference type="NCBIfam" id="NF003544">
    <property type="entry name" value="PRK05201.1"/>
    <property type="match status" value="1"/>
</dbReference>
<dbReference type="PANTHER" id="PTHR48102">
    <property type="entry name" value="ATP-DEPENDENT CLP PROTEASE ATP-BINDING SUBUNIT CLPX-LIKE, MITOCHONDRIAL-RELATED"/>
    <property type="match status" value="1"/>
</dbReference>
<dbReference type="PANTHER" id="PTHR48102:SF3">
    <property type="entry name" value="ATP-DEPENDENT PROTEASE ATPASE SUBUNIT HSLU"/>
    <property type="match status" value="1"/>
</dbReference>
<dbReference type="Pfam" id="PF00004">
    <property type="entry name" value="AAA"/>
    <property type="match status" value="1"/>
</dbReference>
<dbReference type="Pfam" id="PF07724">
    <property type="entry name" value="AAA_2"/>
    <property type="match status" value="1"/>
</dbReference>
<dbReference type="SMART" id="SM00382">
    <property type="entry name" value="AAA"/>
    <property type="match status" value="1"/>
</dbReference>
<dbReference type="SMART" id="SM01086">
    <property type="entry name" value="ClpB_D2-small"/>
    <property type="match status" value="1"/>
</dbReference>
<dbReference type="SUPFAM" id="SSF52540">
    <property type="entry name" value="P-loop containing nucleoside triphosphate hydrolases"/>
    <property type="match status" value="1"/>
</dbReference>